<accession>P40872</accession>
<accession>O31781</accession>
<feature type="chain" id="PRO_0000180300" description="Polyketide synthase PksM">
    <location>
        <begin position="1"/>
        <end position="4262"/>
    </location>
</feature>
<feature type="domain" description="PKS/mFAS DH 1" evidence="4">
    <location>
        <begin position="1"/>
        <end position="271"/>
    </location>
</feature>
<feature type="domain" description="Carrier 1" evidence="2">
    <location>
        <begin position="293"/>
        <end position="367"/>
    </location>
</feature>
<feature type="domain" description="Ketosynthase family 3 (KS3) 1" evidence="3">
    <location>
        <begin position="393"/>
        <end position="831"/>
    </location>
</feature>
<feature type="domain" description="PKS/mFAS DH 2" evidence="4">
    <location>
        <begin position="1009"/>
        <end position="1301"/>
    </location>
</feature>
<feature type="domain" description="Carrier 2" evidence="2">
    <location>
        <begin position="2188"/>
        <end position="2261"/>
    </location>
</feature>
<feature type="domain" description="Ketosynthase family 3 (KS3) 2" evidence="3">
    <location>
        <begin position="2319"/>
        <end position="2734"/>
    </location>
</feature>
<feature type="domain" description="Carrier 3" evidence="2">
    <location>
        <begin position="3409"/>
        <end position="3486"/>
    </location>
</feature>
<feature type="domain" description="Ketosynthase family 3 (KS3) 3" evidence="3">
    <location>
        <begin position="3529"/>
        <end position="3944"/>
    </location>
</feature>
<feature type="domain" description="Carrier 4" evidence="2">
    <location>
        <begin position="4135"/>
        <end position="4212"/>
    </location>
</feature>
<feature type="region of interest" description="N-terminal hotdog fold 1" evidence="4">
    <location>
        <begin position="1"/>
        <end position="114"/>
    </location>
</feature>
<feature type="region of interest" description="C-terminal hotdog fold 1" evidence="4">
    <location>
        <begin position="129"/>
        <end position="271"/>
    </location>
</feature>
<feature type="region of interest" description="N-terminal hotdog fold 2" evidence="4">
    <location>
        <begin position="1009"/>
        <end position="1135"/>
    </location>
</feature>
<feature type="region of interest" description="C-terminal hotdog fold 2" evidence="4">
    <location>
        <begin position="1149"/>
        <end position="1301"/>
    </location>
</feature>
<feature type="region of interest" description="Disordered" evidence="5">
    <location>
        <begin position="2275"/>
        <end position="2313"/>
    </location>
</feature>
<feature type="coiled-coil region" evidence="1">
    <location>
        <begin position="2750"/>
        <end position="2826"/>
    </location>
</feature>
<feature type="coiled-coil region" evidence="1">
    <location>
        <begin position="4004"/>
        <end position="4033"/>
    </location>
</feature>
<feature type="compositionally biased region" description="Polar residues" evidence="5">
    <location>
        <begin position="2275"/>
        <end position="2291"/>
    </location>
</feature>
<feature type="active site" description="Proton acceptor; for dehydratase activity 1" evidence="4">
    <location>
        <position position="18"/>
    </location>
</feature>
<feature type="active site" description="Proton donor; for dehydratase activity 1" evidence="4">
    <location>
        <position position="190"/>
    </location>
</feature>
<feature type="active site" description="For beta-ketoacyl synthase 1 activity" evidence="3">
    <location>
        <position position="569"/>
    </location>
</feature>
<feature type="active site" description="For beta-ketoacyl synthase 1 activity" evidence="3">
    <location>
        <position position="704"/>
    </location>
</feature>
<feature type="active site" description="For beta-ketoacyl synthase 1 activity" evidence="3">
    <location>
        <position position="744"/>
    </location>
</feature>
<feature type="active site" description="Proton acceptor; for dehydratase activity 2" evidence="4">
    <location>
        <position position="1038"/>
    </location>
</feature>
<feature type="active site" description="Proton donor; for dehydratase activity 2" evidence="4">
    <location>
        <position position="1211"/>
    </location>
</feature>
<feature type="active site" description="For beta-ketoacyl synthase 2 activity" evidence="3">
    <location>
        <position position="2476"/>
    </location>
</feature>
<feature type="active site" description="For beta-ketoacyl synthase 2 activity" evidence="3">
    <location>
        <position position="2611"/>
    </location>
</feature>
<feature type="active site" description="For beta-ketoacyl synthase 2 activity" evidence="3">
    <location>
        <position position="2651"/>
    </location>
</feature>
<feature type="active site" description="For beta-ketoacyl synthase 3 activity" evidence="3">
    <location>
        <position position="3690"/>
    </location>
</feature>
<feature type="active site" description="For beta-ketoacyl synthase 3 activity" evidence="3">
    <location>
        <position position="3825"/>
    </location>
</feature>
<feature type="active site" description="For beta-ketoacyl synthase 3 activity" evidence="3">
    <location>
        <position position="3865"/>
    </location>
</feature>
<feature type="modified residue" description="O-(pantetheine 4'-phosphoryl)serine" evidence="2">
    <location>
        <position position="327"/>
    </location>
</feature>
<feature type="modified residue" description="O-(pantetheine 4'-phosphoryl)serine" evidence="2">
    <location>
        <position position="2222"/>
    </location>
</feature>
<feature type="modified residue" description="O-(pantetheine 4'-phosphoryl)serine" evidence="2">
    <location>
        <position position="3446"/>
    </location>
</feature>
<feature type="modified residue" description="O-(pantetheine 4'-phosphoryl)serine" evidence="2">
    <location>
        <position position="4172"/>
    </location>
</feature>
<feature type="sequence conflict" description="In Ref. 4; CAA84505." evidence="8" ref="4">
    <original>K</original>
    <variation>E</variation>
    <location>
        <position position="78"/>
    </location>
</feature>
<feature type="sequence conflict" description="In Ref. 4; CAA84505." evidence="8" ref="4">
    <original>AHGTGTSLGDPIE</original>
    <variation>PMALAPHWEIRLK</variation>
    <location>
        <begin position="703"/>
        <end position="715"/>
    </location>
</feature>
<evidence type="ECO:0000255" key="1"/>
<evidence type="ECO:0000255" key="2">
    <source>
        <dbReference type="PROSITE-ProRule" id="PRU00258"/>
    </source>
</evidence>
<evidence type="ECO:0000255" key="3">
    <source>
        <dbReference type="PROSITE-ProRule" id="PRU01348"/>
    </source>
</evidence>
<evidence type="ECO:0000255" key="4">
    <source>
        <dbReference type="PROSITE-ProRule" id="PRU01363"/>
    </source>
</evidence>
<evidence type="ECO:0000256" key="5">
    <source>
        <dbReference type="SAM" id="MobiDB-lite"/>
    </source>
</evidence>
<evidence type="ECO:0000269" key="6">
    <source>
    </source>
</evidence>
<evidence type="ECO:0000269" key="7">
    <source>
    </source>
</evidence>
<evidence type="ECO:0000305" key="8"/>
<keyword id="KW-0012">Acyltransferase</keyword>
<keyword id="KW-0045">Antibiotic biosynthesis</keyword>
<keyword id="KW-0175">Coiled coil</keyword>
<keyword id="KW-0963">Cytoplasm</keyword>
<keyword id="KW-0511">Multifunctional enzyme</keyword>
<keyword id="KW-0521">NADP</keyword>
<keyword id="KW-0596">Phosphopantetheine</keyword>
<keyword id="KW-0597">Phosphoprotein</keyword>
<keyword id="KW-1185">Reference proteome</keyword>
<keyword id="KW-0677">Repeat</keyword>
<keyword id="KW-0808">Transferase</keyword>
<name>PKSM_BACSU</name>
<protein>
    <recommendedName>
        <fullName>Polyketide synthase PksM</fullName>
    </recommendedName>
</protein>
<sequence>MITEQLHISLNNPIMSNHKVYGQALLPGLAYIDLIYQVFQEHGYAYQELELKNLTIFYPLIADESYDIALTIHVSERKEGTWSIIIDGQKQHGESLSDKRQYVTADMHRKEQTAFAESIDLNQWKSTADRILNLDEIYEQCRSQELVHTGMMKAEGQIYEAKEGAVIDLAVGQEALRHSDAFLFHPTLIDGSGIGSSCLISDQTMYLPLYYESFSASERLQKGCTARILSSSVRQKKELTYMTIEYFNSAGQKVAELKQFAGKSVRNMSAFHSAKEIQEERAAVSQNISRDYPAFEMYLRQLLAKQLERPAEQMDIHAGYYELGLDSSSLLTVVQEIGDKVGADLAPTLLFEFTTIAELAAHLADHYSIGEADDAVRQSPSPIDGVTSSPEIGEDIAIIGMAGRYPKAKNIQEFWEQLKAGTDCITEIPNSRWEWKESDGLDSPAGKPLSKWGGFIEEADCFDPQFFRISPREAEMMDPQERLFLETCWEAIEDAGYTPETIASPQGENKRQHVGVFAGVMHKDYSLIGAEALSEHNPFPLSLNYAQIANRVSYYCNFHGPSMAVDTVCSSSLTAVHLAIESIRNGECEAALAGGVNLSLHPAKYISYGSVGMHSSDGYCHTFGKGGDGYVSGEGVGTVLLKPLRKAEQDGDRIYAVIKGSAINHVGKVSGITVPSPVAQADVIEACLEKTGIDPRTISYVEAHGTGTSLGDPIEVQGLVKAFSRNTQDKQFCSIGSVKSNIGHAEAAAGISGLTKTVLQLHHKTLVPSLHSEELNPYLKLDQTPFFVQHETKEWEQPSFTENGVDVTYPRRAGLSSFGASGSNAHLILEEYIPAESHSETILTKNEEIVIPLSARNKDRLQAYALKLLDFLSEDVNLLALAYTMQAGRVEMEERAAFIVKDIKDLTAKLRAFANGEEEIEGCWTGRAKENQEAAGLASVNALNNNLIRDSEMMEMAKAWVQGKRVTWDDLYGDRKPLKISVPTYPFARERYWISVPEMKTSTVNHILHPLVHRNTSDFTEQRFSSVFTGTEFFLSDHVVQGQKILPGVAYLEMAREAAEKAAGDLDGEQRVVSLKDIVWVRPITIESEPKEIHIGLFPEDNGDISFDIYSSSEHKEEALTIHCQGRAVISDEAETSILNLSSIQTECSLDTVTSEQCYAAFRKIGLDYGEGYQGIEKVYVGKDQLLAKISLPAFLKNDKQHFALHPSLMDSAFHATVGFIVSSVNAAGQAQTLSLPFALQEVDIFSPCPEKIWSYIRYSSDSKAENKVRKYDIDLCDENGRVCVRMKGASMRALDGEQHSKPQLLTDSQLTGHTVMIPVWEPVSLEAEDNASFAGKRAVLCGAAEADRTFIKHHYPQISFVDIRPADDIEAIADKLQAYGSIDHVLWIAPSHRGSIGSDGQEEAVLHLFKLVKACLQLGYGEKQLEWSLVTVQAQPVTQHEAVQPAHASIHGLAGTMAKEYPHWKIRLLDLEKGCTWPVNHMFALPADRLGHAWAYRNQQWHQQQLIPYRSSLSGDTLYRKGGVYVVIGGAGYIGEAWSEYMIRRYQAQIVWIGRSQLNAAIQSKIDRLSALGPEPFYIAADAADKHSLQQAYEQVKKRHPHIHGIVHSAMVLFEQSLEKMKPEEFTAGLAAKIDVSIRMAQVFRQENVDFVLFFSSLVAHIKNVKQSHYASGCTFADAFAHQLSQSWACPVKVMNWGYWGNSEAAEDEHYVQLMNQIGLGLIEPAEAMKALEALLSGPVSQTAFIHTTKPVAVEGVNQNEFITLYPEQPSADAESLMERLPTTGRFQRVTHEELDDLLYRLLLGQLQTAELFDGYTLSVERLQQYKTREFYGKWIRQSSEFLLQHGYLKKVGDSLVRKDQAEDIELLWLEWNAKKEKWLKDSETKAMVVLAEAMLQALPDILTGKVPATDIMFPHSSMELVEGIYKHNQVADYFNKVLADTLLAYLDERLKHDPEASIRIMEIGAGTGGTSAGIFEKLKPYQKHINEYCYTDLSKAFLLHAEKEYGAENPYLTYQLFDVEKPIDQQEFEAGGYDVVIAANVLHATKNIRQTLRHTKAVMKNNGMLLLNEMAGNSLFPHITFGLLEGWWLYEDPAVRIPGCPGLHPDSWKAALESEGFESVFFPAEAAHDLSHQIVAASSNGLVRRMMKNVILPEKVVSQASNQEPAYIHTIDSEEAGQSKHALLREKSTEYMKKLIGETLKIPAGKIESSEPLEKYGIDSIVVVQLTNTLRKEFDHVSSTLFFEYQTIDALVEHFIKTKTEALMKLTGLDRQVQQHTPAESRTQSSQKPDQAAKRTRRFRKLGFSGEKETPTNTLASRDVAVIGISGRYPQAETAEDFWNNLKEGRNCIEEIPKDRWDWKAYYDKEKGKEGSIYTKWGGFIKDMDKFDPLFFQISPLEAERMDPQERLFLQTAYASIEDAGYTPDSLCSSRKIGVFAGVMNKNYPTGYGYWSIANRISYLLNFQGPSLAVDTACSSSLTAIHLALESIYSGSSDCAIAGGVNLVVDPVHYQNLSVMNMLSASDTCKSFGDDADGFVDGEGVGAIVLKPLQQAIADGDHIYGVIKASAINSGGKTNGYTVPNPHAQAQVIKEAIERADIPARTISYLEAHGTGTALGDPIEIAGLTKAFEKDTQEKQFCAIGSSKSNIGHCESAAGIAGLTKILFQFKYGQIAPSLHAQRLNPNIEFSHTPFVVQQQLGEWKRPVIGGQEVPRRAGLSSFGAGGSNAHIILEEYIPRTGAQTPKDHPPALIVLSAKNMERLQEKAEQLLTAIKQKRYCETDLIRIAYTLQTGREAMEERLAFIAESLEDLERKLNDFIENKADSLYLDRIDDNKKALAVLSADEDTEKIIEAWMSKGKYTKLLDLWVKGLSFDWGMLYGTQTPVRISLPAYPFAKERYWAPGAAKAPVSIEQDHDQQTEEPFKVMTFQEVWKEEPATLTSKRIKTLICFLTEREKQNAFASALKNVDQDTKVIFISQGEVYSKQSEYSYQIVRQEPVTFEKAFQSIKEELGEPDAILYMWPMEDKRCIKDHSCIVYLLQGMSAAKLHPSRLLLAGCFEDSLDRSYLESWIGFERSLGLVLPHTKVTGIFQPAEQGSMDDWTRKVWAELQASTEQTVLYQNLKRYVNHIEQTTIQPDNSKLKSGGTYLITGGVGGLGYLFAKHLAKNYAANLILTGRSPFNDEKQKQIKELKDLGGEAMYAEADVSDPIAMGDCVKRGKDRFGAINGVIHAAGIESDSAIFDKKIESFQRIIEPKINGTIALDEWLKNEDLDFMCYFSSSSAVLGDFGCCDYAIGNRFQMAYAQYRNELHNGKTFVINWPVWKDGGMKIGDEETTDMYLKSSGQRFLEAEEGIRMFEHILAQQDAQHLVIAGQPSRVSRFLGMTEPAIPEPATQAPLAQENKDEVKTLSIEKRLEHDLKEHIHTLLKISKDKLNLNKNWADFGFDSIYLAKFSNVLSKHFNIEVTPALFFGYSTLQELISFFLTDHKELIEAFYRDDASEAQKPPEAYAVIPVALEPEASKKSIRQVHDEPIAIIGMSGRFPQADSVHELWDNLKNGKSCISDIPGERRDWGRANRDPEKAVPRWGAFLKDIDRFDPLFFQISPKEAESMDPRQRIFLEEAWHTFEDAGYMGDRIKGKSCGVYVGVEEGEYAHLTGDTDYINGTQNATLSARIAYALDLKGPNMALTAACSSGLVAIHQACSALRQGDCEMALAGGVSLNISHMSFEALTRAEMLSPNGQCKVFDQDANGLVPGEAVAAVLLKPLSKAIEDKDHIYGCIKASGVNYDGKTNGITAPNPFSQAELIENIYEKNEINPLDIQYVMAHSTGSNLGDPLEVQALTSVFSKYTKQKQFCMISSIKPLIGHTFAASGTVALISMLMAMKNQIIPATHHCESENPYIPFKESPFVLCKENRSWIKKNQKPRMGTISTTGISGTNAHAVIEEYIPDDQPSTQRHQGSPQIFVISAQNDDRLQDAACRMIAYLEQNHNLSLPDVAYTLQVGRKAMEARLAIVANNQEQLVRKLKEYVEAMKNGGVSGQQRSLYTGYTEGILEEQDEAVLQALAKERNLENIAECWVKGYQIPWELLHDGDDVRMVSLPGYPFARERYWISSGTQQSEAVKQHSQDMKTEIDEPNGKTHIQKIIVQFLARELGISEDRINFKRNFLDYGMDSILGRKLMRHIEKTTQLKMAGREILECQTVQALSDHLALKAEKQNHSAAAHHIKGTYTDEQIIGLMQEVALGKLDFKSVQNIIEGSKSYES</sequence>
<organism>
    <name type="scientific">Bacillus subtilis (strain 168)</name>
    <dbReference type="NCBI Taxonomy" id="224308"/>
    <lineage>
        <taxon>Bacteria</taxon>
        <taxon>Bacillati</taxon>
        <taxon>Bacillota</taxon>
        <taxon>Bacilli</taxon>
        <taxon>Bacillales</taxon>
        <taxon>Bacillaceae</taxon>
        <taxon>Bacillus</taxon>
    </lineage>
</organism>
<gene>
    <name type="primary">pksM</name>
    <name type="synonym">pksY</name>
    <name type="ordered locus">BSU17200</name>
</gene>
<comment type="function">
    <text evidence="7">Involved in some intermediate steps for the synthesis of the antibiotic polyketide bacillaene which is involved in secondary metabolism.</text>
</comment>
<comment type="cofactor">
    <cofactor evidence="8">
        <name>pantetheine 4'-phosphate</name>
        <dbReference type="ChEBI" id="CHEBI:47942"/>
    </cofactor>
    <text evidence="8">Binds 4 phosphopantetheines covalently.</text>
</comment>
<comment type="pathway">
    <text>Antibiotic biosynthesis; bacillaene biosynthesis.</text>
</comment>
<comment type="subcellular location">
    <subcellularLocation>
        <location evidence="6">Cytoplasm</location>
    </subcellularLocation>
</comment>
<reference key="1">
    <citation type="journal article" date="1997" name="Nature">
        <title>The complete genome sequence of the Gram-positive bacterium Bacillus subtilis.</title>
        <authorList>
            <person name="Kunst F."/>
            <person name="Ogasawara N."/>
            <person name="Moszer I."/>
            <person name="Albertini A.M."/>
            <person name="Alloni G."/>
            <person name="Azevedo V."/>
            <person name="Bertero M.G."/>
            <person name="Bessieres P."/>
            <person name="Bolotin A."/>
            <person name="Borchert S."/>
            <person name="Borriss R."/>
            <person name="Boursier L."/>
            <person name="Brans A."/>
            <person name="Braun M."/>
            <person name="Brignell S.C."/>
            <person name="Bron S."/>
            <person name="Brouillet S."/>
            <person name="Bruschi C.V."/>
            <person name="Caldwell B."/>
            <person name="Capuano V."/>
            <person name="Carter N.M."/>
            <person name="Choi S.-K."/>
            <person name="Codani J.-J."/>
            <person name="Connerton I.F."/>
            <person name="Cummings N.J."/>
            <person name="Daniel R.A."/>
            <person name="Denizot F."/>
            <person name="Devine K.M."/>
            <person name="Duesterhoeft A."/>
            <person name="Ehrlich S.D."/>
            <person name="Emmerson P.T."/>
            <person name="Entian K.-D."/>
            <person name="Errington J."/>
            <person name="Fabret C."/>
            <person name="Ferrari E."/>
            <person name="Foulger D."/>
            <person name="Fritz C."/>
            <person name="Fujita M."/>
            <person name="Fujita Y."/>
            <person name="Fuma S."/>
            <person name="Galizzi A."/>
            <person name="Galleron N."/>
            <person name="Ghim S.-Y."/>
            <person name="Glaser P."/>
            <person name="Goffeau A."/>
            <person name="Golightly E.J."/>
            <person name="Grandi G."/>
            <person name="Guiseppi G."/>
            <person name="Guy B.J."/>
            <person name="Haga K."/>
            <person name="Haiech J."/>
            <person name="Harwood C.R."/>
            <person name="Henaut A."/>
            <person name="Hilbert H."/>
            <person name="Holsappel S."/>
            <person name="Hosono S."/>
            <person name="Hullo M.-F."/>
            <person name="Itaya M."/>
            <person name="Jones L.-M."/>
            <person name="Joris B."/>
            <person name="Karamata D."/>
            <person name="Kasahara Y."/>
            <person name="Klaerr-Blanchard M."/>
            <person name="Klein C."/>
            <person name="Kobayashi Y."/>
            <person name="Koetter P."/>
            <person name="Koningstein G."/>
            <person name="Krogh S."/>
            <person name="Kumano M."/>
            <person name="Kurita K."/>
            <person name="Lapidus A."/>
            <person name="Lardinois S."/>
            <person name="Lauber J."/>
            <person name="Lazarevic V."/>
            <person name="Lee S.-M."/>
            <person name="Levine A."/>
            <person name="Liu H."/>
            <person name="Masuda S."/>
            <person name="Mauel C."/>
            <person name="Medigue C."/>
            <person name="Medina N."/>
            <person name="Mellado R.P."/>
            <person name="Mizuno M."/>
            <person name="Moestl D."/>
            <person name="Nakai S."/>
            <person name="Noback M."/>
            <person name="Noone D."/>
            <person name="O'Reilly M."/>
            <person name="Ogawa K."/>
            <person name="Ogiwara A."/>
            <person name="Oudega B."/>
            <person name="Park S.-H."/>
            <person name="Parro V."/>
            <person name="Pohl T.M."/>
            <person name="Portetelle D."/>
            <person name="Porwollik S."/>
            <person name="Prescott A.M."/>
            <person name="Presecan E."/>
            <person name="Pujic P."/>
            <person name="Purnelle B."/>
            <person name="Rapoport G."/>
            <person name="Rey M."/>
            <person name="Reynolds S."/>
            <person name="Rieger M."/>
            <person name="Rivolta C."/>
            <person name="Rocha E."/>
            <person name="Roche B."/>
            <person name="Rose M."/>
            <person name="Sadaie Y."/>
            <person name="Sato T."/>
            <person name="Scanlan E."/>
            <person name="Schleich S."/>
            <person name="Schroeter R."/>
            <person name="Scoffone F."/>
            <person name="Sekiguchi J."/>
            <person name="Sekowska A."/>
            <person name="Seror S.J."/>
            <person name="Serror P."/>
            <person name="Shin B.-S."/>
            <person name="Soldo B."/>
            <person name="Sorokin A."/>
            <person name="Tacconi E."/>
            <person name="Takagi T."/>
            <person name="Takahashi H."/>
            <person name="Takemaru K."/>
            <person name="Takeuchi M."/>
            <person name="Tamakoshi A."/>
            <person name="Tanaka T."/>
            <person name="Terpstra P."/>
            <person name="Tognoni A."/>
            <person name="Tosato V."/>
            <person name="Uchiyama S."/>
            <person name="Vandenbol M."/>
            <person name="Vannier F."/>
            <person name="Vassarotti A."/>
            <person name="Viari A."/>
            <person name="Wambutt R."/>
            <person name="Wedler E."/>
            <person name="Wedler H."/>
            <person name="Weitzenegger T."/>
            <person name="Winters P."/>
            <person name="Wipat A."/>
            <person name="Yamamoto H."/>
            <person name="Yamane K."/>
            <person name="Yasumoto K."/>
            <person name="Yata K."/>
            <person name="Yoshida K."/>
            <person name="Yoshikawa H.-F."/>
            <person name="Zumstein E."/>
            <person name="Yoshikawa H."/>
            <person name="Danchin A."/>
        </authorList>
    </citation>
    <scope>NUCLEOTIDE SEQUENCE [LARGE SCALE GENOMIC DNA]</scope>
    <source>
        <strain>168</strain>
    </source>
</reference>
<reference key="2">
    <citation type="journal article" date="1999" name="Genome Res.">
        <title>Detecting and analyzing DNA sequencing errors: toward a higher quality of the Bacillus subtilis genome sequence.</title>
        <authorList>
            <person name="Medigue C."/>
            <person name="Rose M."/>
            <person name="Viari A."/>
            <person name="Danchin A."/>
        </authorList>
    </citation>
    <scope>SEQUENCE REVISION</scope>
</reference>
<reference key="3">
    <citation type="journal article" date="2009" name="Microbiology">
        <title>From a consortium sequence to a unified sequence: the Bacillus subtilis 168 reference genome a decade later.</title>
        <authorList>
            <person name="Barbe V."/>
            <person name="Cruveiller S."/>
            <person name="Kunst F."/>
            <person name="Lenoble P."/>
            <person name="Meurice G."/>
            <person name="Sekowska A."/>
            <person name="Vallenet D."/>
            <person name="Wang T."/>
            <person name="Moszer I."/>
            <person name="Medigue C."/>
            <person name="Danchin A."/>
        </authorList>
    </citation>
    <scope>SEQUENCE REVISION</scope>
</reference>
<reference key="4">
    <citation type="submission" date="1994-07" db="EMBL/GenBank/DDBJ databases">
        <authorList>
            <person name="Tognoni A."/>
            <person name="Grandi G."/>
        </authorList>
    </citation>
    <scope>NUCLEOTIDE SEQUENCE [GENOMIC DNA] OF 1-1763</scope>
    <source>
        <strain>168 / PB1424</strain>
    </source>
</reference>
<reference key="5">
    <citation type="journal article" date="2007" name="Proc. Natl. Acad. Sci. U.S.A.">
        <title>A singular enzymatic megacomplex from Bacillus subtilis.</title>
        <authorList>
            <person name="Straight P.D."/>
            <person name="Fischbach M.A."/>
            <person name="Walsh C.T."/>
            <person name="Rudner D.Z."/>
            <person name="Kolter R."/>
        </authorList>
    </citation>
    <scope>SUBCELLULAR LOCATION</scope>
    <source>
        <strain>168 / Marburg / ATCC 6051 / DSM 10 / JCM 1465 / NBRC 13719 / NCIMB 3610 / NRRL NRS-744 / VKM B-501</strain>
    </source>
</reference>
<reference key="6">
    <citation type="journal article" date="2007" name="Proc. Natl. Acad. Sci. U.S.A.">
        <title>The identification of bacillaene, the product of the PksX megacomplex in Bacillus subtilis.</title>
        <authorList>
            <person name="Butcher R.A."/>
            <person name="Schroeder F.C."/>
            <person name="Fischbach M.A."/>
            <person name="Straight P.D."/>
            <person name="Kolter R."/>
            <person name="Walsh C.T."/>
            <person name="Clardy J."/>
        </authorList>
    </citation>
    <scope>FUNCTION IN BACILLAENE BIOSYNTHESIS</scope>
    <source>
        <strain>168 / Marburg / ATCC 6051 / DSM 10 / JCM 1465 / NBRC 13719 / NCIMB 3610 / NRRL NRS-744 / VKM B-501</strain>
    </source>
</reference>
<dbReference type="EMBL" id="AL009126">
    <property type="protein sequence ID" value="CAB13603.3"/>
    <property type="molecule type" value="Genomic_DNA"/>
</dbReference>
<dbReference type="EMBL" id="Z35133">
    <property type="protein sequence ID" value="CAA84505.1"/>
    <property type="molecule type" value="Genomic_DNA"/>
</dbReference>
<dbReference type="PIR" id="C69679">
    <property type="entry name" value="C69679"/>
</dbReference>
<dbReference type="RefSeq" id="NP_389601.3">
    <property type="nucleotide sequence ID" value="NC_000964.3"/>
</dbReference>
<dbReference type="RefSeq" id="WP_003245093.1">
    <property type="nucleotide sequence ID" value="NZ_OZ025638.1"/>
</dbReference>
<dbReference type="SMR" id="P40872"/>
<dbReference type="FunCoup" id="P40872">
    <property type="interactions" value="11"/>
</dbReference>
<dbReference type="STRING" id="224308.BSU17200"/>
<dbReference type="PaxDb" id="224308-BSU17200"/>
<dbReference type="EnsemblBacteria" id="CAB13603">
    <property type="protein sequence ID" value="CAB13603"/>
    <property type="gene ID" value="BSU_17200"/>
</dbReference>
<dbReference type="GeneID" id="940026"/>
<dbReference type="KEGG" id="bsu:BSU17200"/>
<dbReference type="PATRIC" id="fig|224308.179.peg.1865"/>
<dbReference type="eggNOG" id="COG0236">
    <property type="taxonomic scope" value="Bacteria"/>
</dbReference>
<dbReference type="eggNOG" id="COG0451">
    <property type="taxonomic scope" value="Bacteria"/>
</dbReference>
<dbReference type="eggNOG" id="COG1020">
    <property type="taxonomic scope" value="Bacteria"/>
</dbReference>
<dbReference type="eggNOG" id="COG1028">
    <property type="taxonomic scope" value="Bacteria"/>
</dbReference>
<dbReference type="eggNOG" id="COG3321">
    <property type="taxonomic scope" value="Bacteria"/>
</dbReference>
<dbReference type="InParanoid" id="P40872"/>
<dbReference type="OrthoDB" id="2897140at2"/>
<dbReference type="BioCyc" id="BSUB:BSU17200-MONOMER"/>
<dbReference type="UniPathway" id="UPA01003"/>
<dbReference type="Proteomes" id="UP000001570">
    <property type="component" value="Chromosome"/>
</dbReference>
<dbReference type="GO" id="GO:0005737">
    <property type="term" value="C:cytoplasm"/>
    <property type="evidence" value="ECO:0000318"/>
    <property type="project" value="GO_Central"/>
</dbReference>
<dbReference type="GO" id="GO:0004315">
    <property type="term" value="F:3-oxoacyl-[acyl-carrier-protein] synthase activity"/>
    <property type="evidence" value="ECO:0007669"/>
    <property type="project" value="InterPro"/>
</dbReference>
<dbReference type="GO" id="GO:0004312">
    <property type="term" value="F:fatty acid synthase activity"/>
    <property type="evidence" value="ECO:0000318"/>
    <property type="project" value="GO_Central"/>
</dbReference>
<dbReference type="GO" id="GO:0031177">
    <property type="term" value="F:phosphopantetheine binding"/>
    <property type="evidence" value="ECO:0007669"/>
    <property type="project" value="InterPro"/>
</dbReference>
<dbReference type="GO" id="GO:0017000">
    <property type="term" value="P:antibiotic biosynthetic process"/>
    <property type="evidence" value="ECO:0007669"/>
    <property type="project" value="UniProtKB-KW"/>
</dbReference>
<dbReference type="GO" id="GO:0071770">
    <property type="term" value="P:DIM/DIP cell wall layer assembly"/>
    <property type="evidence" value="ECO:0000318"/>
    <property type="project" value="GO_Central"/>
</dbReference>
<dbReference type="GO" id="GO:0006633">
    <property type="term" value="P:fatty acid biosynthetic process"/>
    <property type="evidence" value="ECO:0000318"/>
    <property type="project" value="GO_Central"/>
</dbReference>
<dbReference type="CDD" id="cd08953">
    <property type="entry name" value="KR_2_SDR_x"/>
    <property type="match status" value="2"/>
</dbReference>
<dbReference type="CDD" id="cd00833">
    <property type="entry name" value="PKS"/>
    <property type="match status" value="3"/>
</dbReference>
<dbReference type="FunFam" id="3.40.50.150:FF:000650">
    <property type="entry name" value="Polyketide synthase RzxC"/>
    <property type="match status" value="1"/>
</dbReference>
<dbReference type="FunFam" id="3.40.47.10:FF:000019">
    <property type="entry name" value="Polyketide synthase type I"/>
    <property type="match status" value="2"/>
</dbReference>
<dbReference type="Gene3D" id="1.10.1240.100">
    <property type="match status" value="3"/>
</dbReference>
<dbReference type="Gene3D" id="3.40.47.10">
    <property type="match status" value="3"/>
</dbReference>
<dbReference type="Gene3D" id="1.10.1200.10">
    <property type="entry name" value="ACP-like"/>
    <property type="match status" value="4"/>
</dbReference>
<dbReference type="Gene3D" id="3.40.50.720">
    <property type="entry name" value="NAD(P)-binding Rossmann-like Domain"/>
    <property type="match status" value="2"/>
</dbReference>
<dbReference type="Gene3D" id="3.10.129.110">
    <property type="entry name" value="Polyketide synthase dehydratase"/>
    <property type="match status" value="2"/>
</dbReference>
<dbReference type="Gene3D" id="3.40.50.150">
    <property type="entry name" value="Vaccinia Virus protein VP39"/>
    <property type="match status" value="1"/>
</dbReference>
<dbReference type="InterPro" id="IPR036736">
    <property type="entry name" value="ACP-like_sf"/>
</dbReference>
<dbReference type="InterPro" id="IPR018201">
    <property type="entry name" value="Ketoacyl_synth_AS"/>
</dbReference>
<dbReference type="InterPro" id="IPR014031">
    <property type="entry name" value="Ketoacyl_synth_C"/>
</dbReference>
<dbReference type="InterPro" id="IPR014030">
    <property type="entry name" value="Ketoacyl_synth_N"/>
</dbReference>
<dbReference type="InterPro" id="IPR013217">
    <property type="entry name" value="Methyltransf_12"/>
</dbReference>
<dbReference type="InterPro" id="IPR036291">
    <property type="entry name" value="NAD(P)-bd_dom_sf"/>
</dbReference>
<dbReference type="InterPro" id="IPR020841">
    <property type="entry name" value="PKS_Beta-ketoAc_synthase_dom"/>
</dbReference>
<dbReference type="InterPro" id="IPR042104">
    <property type="entry name" value="PKS_dehydratase_sf"/>
</dbReference>
<dbReference type="InterPro" id="IPR020807">
    <property type="entry name" value="PKS_DH"/>
</dbReference>
<dbReference type="InterPro" id="IPR049551">
    <property type="entry name" value="PKS_DH_C"/>
</dbReference>
<dbReference type="InterPro" id="IPR049552">
    <property type="entry name" value="PKS_DH_N"/>
</dbReference>
<dbReference type="InterPro" id="IPR013968">
    <property type="entry name" value="PKS_KR"/>
</dbReference>
<dbReference type="InterPro" id="IPR049900">
    <property type="entry name" value="PKS_mFAS_DH"/>
</dbReference>
<dbReference type="InterPro" id="IPR050091">
    <property type="entry name" value="PKS_NRPS_Biosynth_Enz"/>
</dbReference>
<dbReference type="InterPro" id="IPR020806">
    <property type="entry name" value="PKS_PP-bd"/>
</dbReference>
<dbReference type="InterPro" id="IPR009081">
    <property type="entry name" value="PP-bd_ACP"/>
</dbReference>
<dbReference type="InterPro" id="IPR006162">
    <property type="entry name" value="Ppantetheine_attach_site"/>
</dbReference>
<dbReference type="InterPro" id="IPR054514">
    <property type="entry name" value="RhiE-like_linker"/>
</dbReference>
<dbReference type="InterPro" id="IPR029063">
    <property type="entry name" value="SAM-dependent_MTases_sf"/>
</dbReference>
<dbReference type="InterPro" id="IPR016039">
    <property type="entry name" value="Thiolase-like"/>
</dbReference>
<dbReference type="InterPro" id="IPR020615">
    <property type="entry name" value="Thiolase_acyl_enz_int_AS"/>
</dbReference>
<dbReference type="PANTHER" id="PTHR43775">
    <property type="entry name" value="FATTY ACID SYNTHASE"/>
    <property type="match status" value="1"/>
</dbReference>
<dbReference type="PANTHER" id="PTHR43775:SF37">
    <property type="entry name" value="SI:DKEY-61P9.11"/>
    <property type="match status" value="1"/>
</dbReference>
<dbReference type="Pfam" id="PF22621">
    <property type="entry name" value="CurL-like_PKS_C"/>
    <property type="match status" value="1"/>
</dbReference>
<dbReference type="Pfam" id="PF00109">
    <property type="entry name" value="ketoacyl-synt"/>
    <property type="match status" value="3"/>
</dbReference>
<dbReference type="Pfam" id="PF02801">
    <property type="entry name" value="Ketoacyl-synt_C"/>
    <property type="match status" value="3"/>
</dbReference>
<dbReference type="Pfam" id="PF08659">
    <property type="entry name" value="KR"/>
    <property type="match status" value="2"/>
</dbReference>
<dbReference type="Pfam" id="PF08242">
    <property type="entry name" value="Methyltransf_12"/>
    <property type="match status" value="1"/>
</dbReference>
<dbReference type="Pfam" id="PF21089">
    <property type="entry name" value="PKS_DH_N"/>
    <property type="match status" value="2"/>
</dbReference>
<dbReference type="Pfam" id="PF00550">
    <property type="entry name" value="PP-binding"/>
    <property type="match status" value="4"/>
</dbReference>
<dbReference type="Pfam" id="PF14765">
    <property type="entry name" value="PS-DH"/>
    <property type="match status" value="1"/>
</dbReference>
<dbReference type="Pfam" id="PF22336">
    <property type="entry name" value="RhiE-like_linker"/>
    <property type="match status" value="2"/>
</dbReference>
<dbReference type="SMART" id="SM00826">
    <property type="entry name" value="PKS_DH"/>
    <property type="match status" value="1"/>
</dbReference>
<dbReference type="SMART" id="SM00822">
    <property type="entry name" value="PKS_KR"/>
    <property type="match status" value="2"/>
</dbReference>
<dbReference type="SMART" id="SM00825">
    <property type="entry name" value="PKS_KS"/>
    <property type="match status" value="3"/>
</dbReference>
<dbReference type="SMART" id="SM00823">
    <property type="entry name" value="PKS_PP"/>
    <property type="match status" value="4"/>
</dbReference>
<dbReference type="SMART" id="SM01294">
    <property type="entry name" value="PKS_PP_betabranch"/>
    <property type="match status" value="2"/>
</dbReference>
<dbReference type="SUPFAM" id="SSF47336">
    <property type="entry name" value="ACP-like"/>
    <property type="match status" value="4"/>
</dbReference>
<dbReference type="SUPFAM" id="SSF51735">
    <property type="entry name" value="NAD(P)-binding Rossmann-fold domains"/>
    <property type="match status" value="3"/>
</dbReference>
<dbReference type="SUPFAM" id="SSF53335">
    <property type="entry name" value="S-adenosyl-L-methionine-dependent methyltransferases"/>
    <property type="match status" value="1"/>
</dbReference>
<dbReference type="SUPFAM" id="SSF53901">
    <property type="entry name" value="Thiolase-like"/>
    <property type="match status" value="3"/>
</dbReference>
<dbReference type="PROSITE" id="PS50075">
    <property type="entry name" value="CARRIER"/>
    <property type="match status" value="4"/>
</dbReference>
<dbReference type="PROSITE" id="PS00606">
    <property type="entry name" value="KS3_1"/>
    <property type="match status" value="2"/>
</dbReference>
<dbReference type="PROSITE" id="PS52004">
    <property type="entry name" value="KS3_2"/>
    <property type="match status" value="3"/>
</dbReference>
<dbReference type="PROSITE" id="PS00012">
    <property type="entry name" value="PHOSPHOPANTETHEINE"/>
    <property type="match status" value="2"/>
</dbReference>
<dbReference type="PROSITE" id="PS52019">
    <property type="entry name" value="PKS_MFAS_DH"/>
    <property type="match status" value="2"/>
</dbReference>
<dbReference type="PROSITE" id="PS00098">
    <property type="entry name" value="THIOLASE_1"/>
    <property type="match status" value="1"/>
</dbReference>
<proteinExistence type="evidence at protein level"/>